<gene>
    <name evidence="6" type="primary">Abat</name>
    <name type="synonym">Gabat</name>
</gene>
<name>GABT_MOUSE</name>
<reference key="1">
    <citation type="journal article" date="2005" name="Science">
        <title>The transcriptional landscape of the mammalian genome.</title>
        <authorList>
            <person name="Carninci P."/>
            <person name="Kasukawa T."/>
            <person name="Katayama S."/>
            <person name="Gough J."/>
            <person name="Frith M.C."/>
            <person name="Maeda N."/>
            <person name="Oyama R."/>
            <person name="Ravasi T."/>
            <person name="Lenhard B."/>
            <person name="Wells C."/>
            <person name="Kodzius R."/>
            <person name="Shimokawa K."/>
            <person name="Bajic V.B."/>
            <person name="Brenner S.E."/>
            <person name="Batalov S."/>
            <person name="Forrest A.R."/>
            <person name="Zavolan M."/>
            <person name="Davis M.J."/>
            <person name="Wilming L.G."/>
            <person name="Aidinis V."/>
            <person name="Allen J.E."/>
            <person name="Ambesi-Impiombato A."/>
            <person name="Apweiler R."/>
            <person name="Aturaliya R.N."/>
            <person name="Bailey T.L."/>
            <person name="Bansal M."/>
            <person name="Baxter L."/>
            <person name="Beisel K.W."/>
            <person name="Bersano T."/>
            <person name="Bono H."/>
            <person name="Chalk A.M."/>
            <person name="Chiu K.P."/>
            <person name="Choudhary V."/>
            <person name="Christoffels A."/>
            <person name="Clutterbuck D.R."/>
            <person name="Crowe M.L."/>
            <person name="Dalla E."/>
            <person name="Dalrymple B.P."/>
            <person name="de Bono B."/>
            <person name="Della Gatta G."/>
            <person name="di Bernardo D."/>
            <person name="Down T."/>
            <person name="Engstrom P."/>
            <person name="Fagiolini M."/>
            <person name="Faulkner G."/>
            <person name="Fletcher C.F."/>
            <person name="Fukushima T."/>
            <person name="Furuno M."/>
            <person name="Futaki S."/>
            <person name="Gariboldi M."/>
            <person name="Georgii-Hemming P."/>
            <person name="Gingeras T.R."/>
            <person name="Gojobori T."/>
            <person name="Green R.E."/>
            <person name="Gustincich S."/>
            <person name="Harbers M."/>
            <person name="Hayashi Y."/>
            <person name="Hensch T.K."/>
            <person name="Hirokawa N."/>
            <person name="Hill D."/>
            <person name="Huminiecki L."/>
            <person name="Iacono M."/>
            <person name="Ikeo K."/>
            <person name="Iwama A."/>
            <person name="Ishikawa T."/>
            <person name="Jakt M."/>
            <person name="Kanapin A."/>
            <person name="Katoh M."/>
            <person name="Kawasawa Y."/>
            <person name="Kelso J."/>
            <person name="Kitamura H."/>
            <person name="Kitano H."/>
            <person name="Kollias G."/>
            <person name="Krishnan S.P."/>
            <person name="Kruger A."/>
            <person name="Kummerfeld S.K."/>
            <person name="Kurochkin I.V."/>
            <person name="Lareau L.F."/>
            <person name="Lazarevic D."/>
            <person name="Lipovich L."/>
            <person name="Liu J."/>
            <person name="Liuni S."/>
            <person name="McWilliam S."/>
            <person name="Madan Babu M."/>
            <person name="Madera M."/>
            <person name="Marchionni L."/>
            <person name="Matsuda H."/>
            <person name="Matsuzawa S."/>
            <person name="Miki H."/>
            <person name="Mignone F."/>
            <person name="Miyake S."/>
            <person name="Morris K."/>
            <person name="Mottagui-Tabar S."/>
            <person name="Mulder N."/>
            <person name="Nakano N."/>
            <person name="Nakauchi H."/>
            <person name="Ng P."/>
            <person name="Nilsson R."/>
            <person name="Nishiguchi S."/>
            <person name="Nishikawa S."/>
            <person name="Nori F."/>
            <person name="Ohara O."/>
            <person name="Okazaki Y."/>
            <person name="Orlando V."/>
            <person name="Pang K.C."/>
            <person name="Pavan W.J."/>
            <person name="Pavesi G."/>
            <person name="Pesole G."/>
            <person name="Petrovsky N."/>
            <person name="Piazza S."/>
            <person name="Reed J."/>
            <person name="Reid J.F."/>
            <person name="Ring B.Z."/>
            <person name="Ringwald M."/>
            <person name="Rost B."/>
            <person name="Ruan Y."/>
            <person name="Salzberg S.L."/>
            <person name="Sandelin A."/>
            <person name="Schneider C."/>
            <person name="Schoenbach C."/>
            <person name="Sekiguchi K."/>
            <person name="Semple C.A."/>
            <person name="Seno S."/>
            <person name="Sessa L."/>
            <person name="Sheng Y."/>
            <person name="Shibata Y."/>
            <person name="Shimada H."/>
            <person name="Shimada K."/>
            <person name="Silva D."/>
            <person name="Sinclair B."/>
            <person name="Sperling S."/>
            <person name="Stupka E."/>
            <person name="Sugiura K."/>
            <person name="Sultana R."/>
            <person name="Takenaka Y."/>
            <person name="Taki K."/>
            <person name="Tammoja K."/>
            <person name="Tan S.L."/>
            <person name="Tang S."/>
            <person name="Taylor M.S."/>
            <person name="Tegner J."/>
            <person name="Teichmann S.A."/>
            <person name="Ueda H.R."/>
            <person name="van Nimwegen E."/>
            <person name="Verardo R."/>
            <person name="Wei C.L."/>
            <person name="Yagi K."/>
            <person name="Yamanishi H."/>
            <person name="Zabarovsky E."/>
            <person name="Zhu S."/>
            <person name="Zimmer A."/>
            <person name="Hide W."/>
            <person name="Bult C."/>
            <person name="Grimmond S.M."/>
            <person name="Teasdale R.D."/>
            <person name="Liu E.T."/>
            <person name="Brusic V."/>
            <person name="Quackenbush J."/>
            <person name="Wahlestedt C."/>
            <person name="Mattick J.S."/>
            <person name="Hume D.A."/>
            <person name="Kai C."/>
            <person name="Sasaki D."/>
            <person name="Tomaru Y."/>
            <person name="Fukuda S."/>
            <person name="Kanamori-Katayama M."/>
            <person name="Suzuki M."/>
            <person name="Aoki J."/>
            <person name="Arakawa T."/>
            <person name="Iida J."/>
            <person name="Imamura K."/>
            <person name="Itoh M."/>
            <person name="Kato T."/>
            <person name="Kawaji H."/>
            <person name="Kawagashira N."/>
            <person name="Kawashima T."/>
            <person name="Kojima M."/>
            <person name="Kondo S."/>
            <person name="Konno H."/>
            <person name="Nakano K."/>
            <person name="Ninomiya N."/>
            <person name="Nishio T."/>
            <person name="Okada M."/>
            <person name="Plessy C."/>
            <person name="Shibata K."/>
            <person name="Shiraki T."/>
            <person name="Suzuki S."/>
            <person name="Tagami M."/>
            <person name="Waki K."/>
            <person name="Watahiki A."/>
            <person name="Okamura-Oho Y."/>
            <person name="Suzuki H."/>
            <person name="Kawai J."/>
            <person name="Hayashizaki Y."/>
        </authorList>
    </citation>
    <scope>NUCLEOTIDE SEQUENCE [LARGE SCALE MRNA] (ISOFORM 2)</scope>
    <source>
        <strain>C57BL/6J</strain>
        <tissue>Cerebellum</tissue>
    </source>
</reference>
<reference key="2">
    <citation type="journal article" date="2004" name="Genome Res.">
        <title>The status, quality, and expansion of the NIH full-length cDNA project: the Mammalian Gene Collection (MGC).</title>
        <authorList>
            <consortium name="The MGC Project Team"/>
        </authorList>
    </citation>
    <scope>NUCLEOTIDE SEQUENCE [LARGE SCALE MRNA] (ISOFORM 1)</scope>
    <source>
        <strain>C57BL/6J</strain>
        <tissue>Brain</tissue>
    </source>
</reference>
<reference key="3">
    <citation type="submission" date="2009-01" db="UniProtKB">
        <authorList>
            <person name="Lubec G."/>
            <person name="Klug S."/>
            <person name="Friebe K."/>
            <person name="Kang S.U."/>
            <person name="Sunyer B."/>
            <person name="Chen W.-Q."/>
        </authorList>
    </citation>
    <scope>PROTEIN SEQUENCE OF 35-47; 61-173; 221-231; 236-279; 286-310; 318-337; 368-410; 414-432; 437-450 AND 461-470</scope>
    <scope>IDENTIFICATION BY MASS SPECTROMETRY</scope>
    <source>
        <strain>C57BL/6J</strain>
        <strain>OF1</strain>
        <tissue>Brain</tissue>
        <tissue>Hippocampus</tissue>
    </source>
</reference>
<reference key="4">
    <citation type="journal article" date="2010" name="Cell">
        <title>A tissue-specific atlas of mouse protein phosphorylation and expression.</title>
        <authorList>
            <person name="Huttlin E.L."/>
            <person name="Jedrychowski M.P."/>
            <person name="Elias J.E."/>
            <person name="Goswami T."/>
            <person name="Rad R."/>
            <person name="Beausoleil S.A."/>
            <person name="Villen J."/>
            <person name="Haas W."/>
            <person name="Sowa M.E."/>
            <person name="Gygi S.P."/>
        </authorList>
    </citation>
    <scope>IDENTIFICATION BY MASS SPECTROMETRY [LARGE SCALE ANALYSIS]</scope>
    <source>
        <tissue>Brain</tissue>
        <tissue>Brown adipose tissue</tissue>
        <tissue>Kidney</tissue>
        <tissue>Liver</tissue>
        <tissue>Lung</tissue>
        <tissue>Pancreas</tissue>
        <tissue>Spleen</tissue>
        <tissue>Testis</tissue>
    </source>
</reference>
<reference key="5">
    <citation type="journal article" date="2013" name="Mol. Cell">
        <title>SIRT5-mediated lysine desuccinylation impacts diverse metabolic pathways.</title>
        <authorList>
            <person name="Park J."/>
            <person name="Chen Y."/>
            <person name="Tishkoff D.X."/>
            <person name="Peng C."/>
            <person name="Tan M."/>
            <person name="Dai L."/>
            <person name="Xie Z."/>
            <person name="Zhang Y."/>
            <person name="Zwaans B.M."/>
            <person name="Skinner M.E."/>
            <person name="Lombard D.B."/>
            <person name="Zhao Y."/>
        </authorList>
    </citation>
    <scope>SUCCINYLATION [LARGE SCALE ANALYSIS] AT LYS-231; LYS-252 AND LYS-413</scope>
    <scope>IDENTIFICATION BY MASS SPECTROMETRY [LARGE SCALE ANALYSIS]</scope>
    <source>
        <tissue>Liver</tissue>
    </source>
</reference>
<reference key="6">
    <citation type="journal article" date="2013" name="Proc. Natl. Acad. Sci. U.S.A.">
        <title>Label-free quantitative proteomics of the lysine acetylome in mitochondria identifies substrates of SIRT3 in metabolic pathways.</title>
        <authorList>
            <person name="Rardin M.J."/>
            <person name="Newman J.C."/>
            <person name="Held J.M."/>
            <person name="Cusack M.P."/>
            <person name="Sorensen D.J."/>
            <person name="Li B."/>
            <person name="Schilling B."/>
            <person name="Mooney S.D."/>
            <person name="Kahn C.R."/>
            <person name="Verdin E."/>
            <person name="Gibson B.W."/>
        </authorList>
    </citation>
    <scope>ACETYLATION [LARGE SCALE ANALYSIS] AT LYS-252; LYS-279; LYS-318; LYS-413; LYS-452 AND LYS-470</scope>
    <scope>IDENTIFICATION BY MASS SPECTROMETRY [LARGE SCALE ANALYSIS]</scope>
    <source>
        <tissue>Liver</tissue>
    </source>
</reference>
<keyword id="KW-0007">Acetylation</keyword>
<keyword id="KW-0025">Alternative splicing</keyword>
<keyword id="KW-0032">Aminotransferase</keyword>
<keyword id="KW-0903">Direct protein sequencing</keyword>
<keyword id="KW-1015">Disulfide bond</keyword>
<keyword id="KW-0408">Iron</keyword>
<keyword id="KW-0411">Iron-sulfur</keyword>
<keyword id="KW-0479">Metal-binding</keyword>
<keyword id="KW-0496">Mitochondrion</keyword>
<keyword id="KW-0531">Neurotransmitter degradation</keyword>
<keyword id="KW-0663">Pyridoxal phosphate</keyword>
<keyword id="KW-1185">Reference proteome</keyword>
<keyword id="KW-0808">Transferase</keyword>
<keyword id="KW-0809">Transit peptide</keyword>
<evidence type="ECO:0000250" key="1"/>
<evidence type="ECO:0000250" key="2">
    <source>
        <dbReference type="UniProtKB" id="P50554"/>
    </source>
</evidence>
<evidence type="ECO:0000250" key="3">
    <source>
        <dbReference type="UniProtKB" id="P80147"/>
    </source>
</evidence>
<evidence type="ECO:0000303" key="4">
    <source>
    </source>
</evidence>
<evidence type="ECO:0000305" key="5"/>
<evidence type="ECO:0000312" key="6">
    <source>
        <dbReference type="MGI" id="MGI:2443582"/>
    </source>
</evidence>
<evidence type="ECO:0007744" key="7">
    <source>
    </source>
</evidence>
<evidence type="ECO:0007744" key="8">
    <source>
    </source>
</evidence>
<comment type="function">
    <text evidence="2">Catalyzes the conversion of gamma-aminobutyrate and L-beta-aminoisobutyrate to succinate semialdehyde and methylmalonate semialdehyde, respectively. Can also convert delta-aminovalerate and beta-alanine.</text>
</comment>
<comment type="catalytic activity">
    <reaction evidence="2">
        <text>4-aminobutanoate + 2-oxoglutarate = succinate semialdehyde + L-glutamate</text>
        <dbReference type="Rhea" id="RHEA:23352"/>
        <dbReference type="ChEBI" id="CHEBI:16810"/>
        <dbReference type="ChEBI" id="CHEBI:29985"/>
        <dbReference type="ChEBI" id="CHEBI:57706"/>
        <dbReference type="ChEBI" id="CHEBI:59888"/>
        <dbReference type="EC" id="2.6.1.19"/>
    </reaction>
    <physiologicalReaction direction="left-to-right" evidence="2">
        <dbReference type="Rhea" id="RHEA:23353"/>
    </physiologicalReaction>
</comment>
<comment type="catalytic activity">
    <reaction evidence="2">
        <text>(S)-3-amino-2-methylpropanoate + 2-oxoglutarate = 2-methyl-3-oxopropanoate + L-glutamate</text>
        <dbReference type="Rhea" id="RHEA:13993"/>
        <dbReference type="ChEBI" id="CHEBI:16810"/>
        <dbReference type="ChEBI" id="CHEBI:29985"/>
        <dbReference type="ChEBI" id="CHEBI:57700"/>
        <dbReference type="ChEBI" id="CHEBI:58655"/>
        <dbReference type="EC" id="2.6.1.22"/>
    </reaction>
    <physiologicalReaction direction="left-to-right" evidence="2">
        <dbReference type="Rhea" id="RHEA:13994"/>
    </physiologicalReaction>
</comment>
<comment type="cofactor">
    <cofactor evidence="3">
        <name>pyridoxal 5'-phosphate</name>
        <dbReference type="ChEBI" id="CHEBI:597326"/>
    </cofactor>
    <cofactor evidence="3">
        <name>[2Fe-2S] cluster</name>
        <dbReference type="ChEBI" id="CHEBI:190135"/>
    </cofactor>
    <text evidence="3">Binds 1 [2Fe-2S] cluster per homodimer.</text>
</comment>
<comment type="subunit">
    <text evidence="1">Homodimer; disulfide-linked.</text>
</comment>
<comment type="subcellular location">
    <subcellularLocation>
        <location evidence="1">Mitochondrion matrix</location>
    </subcellularLocation>
</comment>
<comment type="alternative products">
    <event type="alternative splicing"/>
    <isoform>
        <id>P61922-1</id>
        <name>1</name>
        <sequence type="displayed"/>
    </isoform>
    <isoform>
        <id>P61922-2</id>
        <name>2</name>
        <sequence type="described" ref="VSP_012005"/>
    </isoform>
</comment>
<comment type="similarity">
    <text evidence="5">Belongs to the class-III pyridoxal-phosphate-dependent aminotransferase family.</text>
</comment>
<dbReference type="EC" id="2.6.1.19" evidence="2"/>
<dbReference type="EC" id="2.6.1.22" evidence="2"/>
<dbReference type="EMBL" id="BC058079">
    <property type="protein sequence ID" value="AAH58079.1"/>
    <property type="molecule type" value="mRNA"/>
</dbReference>
<dbReference type="EMBL" id="BC058521">
    <property type="protein sequence ID" value="AAH58521.1"/>
    <property type="molecule type" value="mRNA"/>
</dbReference>
<dbReference type="EMBL" id="AK036128">
    <property type="protein sequence ID" value="BAC29312.1"/>
    <property type="molecule type" value="mRNA"/>
</dbReference>
<dbReference type="CCDS" id="CCDS27939.1">
    <molecule id="P61922-1"/>
</dbReference>
<dbReference type="CCDS" id="CCDS49754.1">
    <molecule id="P61922-2"/>
</dbReference>
<dbReference type="RefSeq" id="NP_001164449.1">
    <molecule id="P61922-2"/>
    <property type="nucleotide sequence ID" value="NM_001170978.1"/>
</dbReference>
<dbReference type="RefSeq" id="NP_766549.2">
    <molecule id="P61922-1"/>
    <property type="nucleotide sequence ID" value="NM_172961.3"/>
</dbReference>
<dbReference type="SMR" id="P61922"/>
<dbReference type="BioGRID" id="234569">
    <property type="interactions" value="12"/>
</dbReference>
<dbReference type="FunCoup" id="P61922">
    <property type="interactions" value="1187"/>
</dbReference>
<dbReference type="IntAct" id="P61922">
    <property type="interactions" value="1"/>
</dbReference>
<dbReference type="MINT" id="P61922"/>
<dbReference type="STRING" id="10090.ENSMUSP00000063548"/>
<dbReference type="BindingDB" id="P61922"/>
<dbReference type="ChEMBL" id="CHEMBL4523258"/>
<dbReference type="DrugCentral" id="P61922"/>
<dbReference type="GlyGen" id="P61922">
    <property type="glycosylation" value="1 site, 1 O-linked glycan (1 site)"/>
</dbReference>
<dbReference type="iPTMnet" id="P61922"/>
<dbReference type="PhosphoSitePlus" id="P61922"/>
<dbReference type="SwissPalm" id="P61922"/>
<dbReference type="REPRODUCTION-2DPAGE" id="IPI00407499"/>
<dbReference type="jPOST" id="P61922"/>
<dbReference type="PaxDb" id="10090-ENSMUSP00000063548"/>
<dbReference type="PeptideAtlas" id="P61922"/>
<dbReference type="ProteomicsDB" id="271823">
    <molecule id="P61922-1"/>
</dbReference>
<dbReference type="ProteomicsDB" id="271824">
    <molecule id="P61922-2"/>
</dbReference>
<dbReference type="Antibodypedia" id="24533">
    <property type="antibodies" value="395 antibodies from 30 providers"/>
</dbReference>
<dbReference type="DNASU" id="268860"/>
<dbReference type="Ensembl" id="ENSMUST00000065987.14">
    <molecule id="P61922-1"/>
    <property type="protein sequence ID" value="ENSMUSP00000063548.8"/>
    <property type="gene ID" value="ENSMUSG00000057880.13"/>
</dbReference>
<dbReference type="Ensembl" id="ENSMUST00000115839.9">
    <molecule id="P61922-2"/>
    <property type="protein sequence ID" value="ENSMUSP00000111505.3"/>
    <property type="gene ID" value="ENSMUSG00000057880.13"/>
</dbReference>
<dbReference type="GeneID" id="268860"/>
<dbReference type="KEGG" id="mmu:268860"/>
<dbReference type="UCSC" id="uc007yco.2">
    <molecule id="P61922-1"/>
    <property type="organism name" value="mouse"/>
</dbReference>
<dbReference type="UCSC" id="uc007ycp.2">
    <molecule id="P61922-2"/>
    <property type="organism name" value="mouse"/>
</dbReference>
<dbReference type="AGR" id="MGI:2443582"/>
<dbReference type="CTD" id="18"/>
<dbReference type="MGI" id="MGI:2443582">
    <property type="gene designation" value="Abat"/>
</dbReference>
<dbReference type="VEuPathDB" id="HostDB:ENSMUSG00000057880"/>
<dbReference type="eggNOG" id="KOG1405">
    <property type="taxonomic scope" value="Eukaryota"/>
</dbReference>
<dbReference type="GeneTree" id="ENSGT00550000074885"/>
<dbReference type="HOGENOM" id="CLU_016922_12_0_1"/>
<dbReference type="InParanoid" id="P61922"/>
<dbReference type="OMA" id="GLMCAFD"/>
<dbReference type="OrthoDB" id="5419315at2759"/>
<dbReference type="PhylomeDB" id="P61922"/>
<dbReference type="TreeFam" id="TF105021"/>
<dbReference type="BRENDA" id="2.6.1.19">
    <property type="organism ID" value="3474"/>
</dbReference>
<dbReference type="Reactome" id="R-MMU-916853">
    <property type="pathway name" value="Degradation of GABA"/>
</dbReference>
<dbReference type="BioGRID-ORCS" id="268860">
    <property type="hits" value="0 hits in 79 CRISPR screens"/>
</dbReference>
<dbReference type="ChiTaRS" id="Abat">
    <property type="organism name" value="mouse"/>
</dbReference>
<dbReference type="PRO" id="PR:P61922"/>
<dbReference type="Proteomes" id="UP000000589">
    <property type="component" value="Chromosome 16"/>
</dbReference>
<dbReference type="RNAct" id="P61922">
    <property type="molecule type" value="protein"/>
</dbReference>
<dbReference type="Bgee" id="ENSMUSG00000057880">
    <property type="expression patterns" value="Expressed in nucleus accumbens and 243 other cell types or tissues"/>
</dbReference>
<dbReference type="ExpressionAtlas" id="P61922">
    <property type="expression patterns" value="baseline and differential"/>
</dbReference>
<dbReference type="GO" id="GO:0032144">
    <property type="term" value="C:4-aminobutyrate transaminase complex"/>
    <property type="evidence" value="ECO:0000250"/>
    <property type="project" value="UniProtKB"/>
</dbReference>
<dbReference type="GO" id="GO:0005759">
    <property type="term" value="C:mitochondrial matrix"/>
    <property type="evidence" value="ECO:0007669"/>
    <property type="project" value="UniProtKB-SubCell"/>
</dbReference>
<dbReference type="GO" id="GO:0005739">
    <property type="term" value="C:mitochondrion"/>
    <property type="evidence" value="ECO:0007005"/>
    <property type="project" value="MGI"/>
</dbReference>
<dbReference type="GO" id="GO:0047298">
    <property type="term" value="F:(S)-3-amino-2-methylpropionate transaminase activity"/>
    <property type="evidence" value="ECO:0007669"/>
    <property type="project" value="UniProtKB-EC"/>
</dbReference>
<dbReference type="GO" id="GO:0034386">
    <property type="term" value="F:4-aminobutyrate:2-oxoglutarate transaminase activity"/>
    <property type="evidence" value="ECO:0007669"/>
    <property type="project" value="UniProtKB-EC"/>
</dbReference>
<dbReference type="GO" id="GO:0042802">
    <property type="term" value="F:identical protein binding"/>
    <property type="evidence" value="ECO:0000250"/>
    <property type="project" value="UniProtKB"/>
</dbReference>
<dbReference type="GO" id="GO:0051536">
    <property type="term" value="F:iron-sulfur cluster binding"/>
    <property type="evidence" value="ECO:0007669"/>
    <property type="project" value="UniProtKB-KW"/>
</dbReference>
<dbReference type="GO" id="GO:0046872">
    <property type="term" value="F:metal ion binding"/>
    <property type="evidence" value="ECO:0007669"/>
    <property type="project" value="UniProtKB-KW"/>
</dbReference>
<dbReference type="GO" id="GO:0030170">
    <property type="term" value="F:pyridoxal phosphate binding"/>
    <property type="evidence" value="ECO:0000250"/>
    <property type="project" value="UniProtKB"/>
</dbReference>
<dbReference type="GO" id="GO:0032145">
    <property type="term" value="F:succinate-semialdehyde dehydrogenase binding"/>
    <property type="evidence" value="ECO:0000250"/>
    <property type="project" value="UniProtKB"/>
</dbReference>
<dbReference type="GO" id="GO:0021549">
    <property type="term" value="P:cerebellum development"/>
    <property type="evidence" value="ECO:0007669"/>
    <property type="project" value="Ensembl"/>
</dbReference>
<dbReference type="GO" id="GO:0007620">
    <property type="term" value="P:copulation"/>
    <property type="evidence" value="ECO:0007669"/>
    <property type="project" value="Ensembl"/>
</dbReference>
<dbReference type="GO" id="GO:0035640">
    <property type="term" value="P:exploration behavior"/>
    <property type="evidence" value="ECO:0007669"/>
    <property type="project" value="Ensembl"/>
</dbReference>
<dbReference type="GO" id="GO:0009449">
    <property type="term" value="P:gamma-aminobutyric acid biosynthetic process"/>
    <property type="evidence" value="ECO:0007669"/>
    <property type="project" value="Ensembl"/>
</dbReference>
<dbReference type="GO" id="GO:0007626">
    <property type="term" value="P:locomotory behavior"/>
    <property type="evidence" value="ECO:0007669"/>
    <property type="project" value="Ensembl"/>
</dbReference>
<dbReference type="GO" id="GO:0045776">
    <property type="term" value="P:negative regulation of blood pressure"/>
    <property type="evidence" value="ECO:0007669"/>
    <property type="project" value="Ensembl"/>
</dbReference>
<dbReference type="GO" id="GO:0033602">
    <property type="term" value="P:negative regulation of dopamine secretion"/>
    <property type="evidence" value="ECO:0007669"/>
    <property type="project" value="Ensembl"/>
</dbReference>
<dbReference type="GO" id="GO:0014053">
    <property type="term" value="P:negative regulation of gamma-aminobutyric acid secretion"/>
    <property type="evidence" value="ECO:0007669"/>
    <property type="project" value="Ensembl"/>
</dbReference>
<dbReference type="GO" id="GO:0050877">
    <property type="term" value="P:nervous system process"/>
    <property type="evidence" value="ECO:0000315"/>
    <property type="project" value="UniProtKB"/>
</dbReference>
<dbReference type="GO" id="GO:1904450">
    <property type="term" value="P:positive regulation of aspartate secretion"/>
    <property type="evidence" value="ECO:0007669"/>
    <property type="project" value="Ensembl"/>
</dbReference>
<dbReference type="GO" id="GO:0045964">
    <property type="term" value="P:positive regulation of dopamine metabolic process"/>
    <property type="evidence" value="ECO:0007669"/>
    <property type="project" value="Ensembl"/>
</dbReference>
<dbReference type="GO" id="GO:0031652">
    <property type="term" value="P:positive regulation of heat generation"/>
    <property type="evidence" value="ECO:0007669"/>
    <property type="project" value="Ensembl"/>
</dbReference>
<dbReference type="GO" id="GO:0097151">
    <property type="term" value="P:positive regulation of inhibitory postsynaptic potential"/>
    <property type="evidence" value="ECO:0007669"/>
    <property type="project" value="Ensembl"/>
</dbReference>
<dbReference type="GO" id="GO:0032024">
    <property type="term" value="P:positive regulation of insulin secretion"/>
    <property type="evidence" value="ECO:0007669"/>
    <property type="project" value="Ensembl"/>
</dbReference>
<dbReference type="GO" id="GO:1902722">
    <property type="term" value="P:positive regulation of prolactin secretion"/>
    <property type="evidence" value="ECO:0007669"/>
    <property type="project" value="Ensembl"/>
</dbReference>
<dbReference type="GO" id="GO:0070474">
    <property type="term" value="P:positive regulation of uterine smooth muscle contraction"/>
    <property type="evidence" value="ECO:0007669"/>
    <property type="project" value="Ensembl"/>
</dbReference>
<dbReference type="GO" id="GO:0042220">
    <property type="term" value="P:response to cocaine"/>
    <property type="evidence" value="ECO:0007669"/>
    <property type="project" value="Ensembl"/>
</dbReference>
<dbReference type="GO" id="GO:0045471">
    <property type="term" value="P:response to ethanol"/>
    <property type="evidence" value="ECO:0007669"/>
    <property type="project" value="Ensembl"/>
</dbReference>
<dbReference type="GO" id="GO:0001666">
    <property type="term" value="P:response to hypoxia"/>
    <property type="evidence" value="ECO:0007669"/>
    <property type="project" value="Ensembl"/>
</dbReference>
<dbReference type="GO" id="GO:0010039">
    <property type="term" value="P:response to iron ion"/>
    <property type="evidence" value="ECO:0007669"/>
    <property type="project" value="Ensembl"/>
</dbReference>
<dbReference type="GO" id="GO:0035094">
    <property type="term" value="P:response to nicotine"/>
    <property type="evidence" value="ECO:0007669"/>
    <property type="project" value="Ensembl"/>
</dbReference>
<dbReference type="GO" id="GO:0009410">
    <property type="term" value="P:response to xenobiotic stimulus"/>
    <property type="evidence" value="ECO:0007669"/>
    <property type="project" value="Ensembl"/>
</dbReference>
<dbReference type="CDD" id="cd00610">
    <property type="entry name" value="OAT_like"/>
    <property type="match status" value="1"/>
</dbReference>
<dbReference type="FunFam" id="3.40.640.10:FF:000029">
    <property type="entry name" value="4-aminobutyrate aminotransferase, mitochondrial"/>
    <property type="match status" value="1"/>
</dbReference>
<dbReference type="FunFam" id="3.90.1150.10:FF:000191">
    <property type="entry name" value="4-aminobutyrate aminotransferase, mitochondrial"/>
    <property type="match status" value="2"/>
</dbReference>
<dbReference type="Gene3D" id="3.90.1150.10">
    <property type="entry name" value="Aspartate Aminotransferase, domain 1"/>
    <property type="match status" value="1"/>
</dbReference>
<dbReference type="Gene3D" id="3.40.640.10">
    <property type="entry name" value="Type I PLP-dependent aspartate aminotransferase-like (Major domain)"/>
    <property type="match status" value="1"/>
</dbReference>
<dbReference type="InterPro" id="IPR004631">
    <property type="entry name" value="4NH2But_aminotransferase_euk"/>
</dbReference>
<dbReference type="InterPro" id="IPR005814">
    <property type="entry name" value="Aminotrans_3"/>
</dbReference>
<dbReference type="InterPro" id="IPR049704">
    <property type="entry name" value="Aminotrans_3_PPA_site"/>
</dbReference>
<dbReference type="InterPro" id="IPR015424">
    <property type="entry name" value="PyrdxlP-dep_Trfase"/>
</dbReference>
<dbReference type="InterPro" id="IPR015421">
    <property type="entry name" value="PyrdxlP-dep_Trfase_major"/>
</dbReference>
<dbReference type="InterPro" id="IPR015422">
    <property type="entry name" value="PyrdxlP-dep_Trfase_small"/>
</dbReference>
<dbReference type="NCBIfam" id="TIGR00699">
    <property type="entry name" value="GABAtrns_euk"/>
    <property type="match status" value="1"/>
</dbReference>
<dbReference type="PANTHER" id="PTHR43206:SF1">
    <property type="entry name" value="4-AMINOBUTYRATE AMINOTRANSFERASE, MITOCHONDRIAL"/>
    <property type="match status" value="1"/>
</dbReference>
<dbReference type="PANTHER" id="PTHR43206">
    <property type="entry name" value="AMINOTRANSFERASE"/>
    <property type="match status" value="1"/>
</dbReference>
<dbReference type="Pfam" id="PF00202">
    <property type="entry name" value="Aminotran_3"/>
    <property type="match status" value="1"/>
</dbReference>
<dbReference type="PIRSF" id="PIRSF000521">
    <property type="entry name" value="Transaminase_4ab_Lys_Orn"/>
    <property type="match status" value="1"/>
</dbReference>
<dbReference type="SUPFAM" id="SSF53383">
    <property type="entry name" value="PLP-dependent transferases"/>
    <property type="match status" value="1"/>
</dbReference>
<dbReference type="PROSITE" id="PS00600">
    <property type="entry name" value="AA_TRANSFER_CLASS_3"/>
    <property type="match status" value="1"/>
</dbReference>
<accession>P61922</accession>
<accession>Q8BZA3</accession>
<feature type="transit peptide" description="Mitochondrion" evidence="1">
    <location>
        <begin position="1"/>
        <end position="28"/>
    </location>
</feature>
<feature type="chain" id="PRO_0000001250" description="4-aminobutyrate aminotransferase, mitochondrial">
    <location>
        <begin position="29"/>
        <end position="500"/>
    </location>
</feature>
<feature type="binding site" evidence="3">
    <location>
        <position position="163"/>
    </location>
    <ligand>
        <name>[2Fe-2S] cluster</name>
        <dbReference type="ChEBI" id="CHEBI:190135"/>
        <note>ligand shared between dimeric partners</note>
    </ligand>
</feature>
<feature type="binding site" description="in other chain" evidence="3">
    <location>
        <begin position="164"/>
        <end position="165"/>
    </location>
    <ligand>
        <name>pyridoxal 5'-phosphate</name>
        <dbReference type="ChEBI" id="CHEBI:597326"/>
        <note>ligand shared between dimeric partners</note>
    </ligand>
</feature>
<feature type="binding site" evidence="3">
    <location>
        <position position="166"/>
    </location>
    <ligand>
        <name>[2Fe-2S] cluster</name>
        <dbReference type="ChEBI" id="CHEBI:190135"/>
        <note>ligand shared between dimeric partners</note>
    </ligand>
</feature>
<feature type="binding site" evidence="3">
    <location>
        <position position="220"/>
    </location>
    <ligand>
        <name>substrate</name>
    </ligand>
</feature>
<feature type="binding site" evidence="3">
    <location>
        <position position="381"/>
    </location>
    <ligand>
        <name>pyridoxal 5'-phosphate</name>
        <dbReference type="ChEBI" id="CHEBI:597326"/>
        <note>ligand shared between dimeric partners</note>
    </ligand>
</feature>
<feature type="modified residue" description="N6-succinyllysine" evidence="8">
    <location>
        <position position="231"/>
    </location>
</feature>
<feature type="modified residue" description="N6-acetyllysine; alternate" evidence="7">
    <location>
        <position position="252"/>
    </location>
</feature>
<feature type="modified residue" description="N6-succinyllysine; alternate" evidence="8">
    <location>
        <position position="252"/>
    </location>
</feature>
<feature type="modified residue" description="N6-acetyllysine" evidence="7">
    <location>
        <position position="279"/>
    </location>
</feature>
<feature type="modified residue" description="N6-acetyllysine" evidence="7">
    <location>
        <position position="318"/>
    </location>
</feature>
<feature type="modified residue" description="N6-(pyridoxal phosphate)lysine" evidence="3">
    <location>
        <position position="357"/>
    </location>
</feature>
<feature type="modified residue" description="N6-acetyllysine; alternate" evidence="7">
    <location>
        <position position="413"/>
    </location>
</feature>
<feature type="modified residue" description="N6-succinyllysine; alternate" evidence="8">
    <location>
        <position position="413"/>
    </location>
</feature>
<feature type="modified residue" description="N6-acetyllysine" evidence="7">
    <location>
        <position position="452"/>
    </location>
</feature>
<feature type="modified residue" description="N6-acetyllysine" evidence="7">
    <location>
        <position position="470"/>
    </location>
</feature>
<feature type="disulfide bond" description="Interchain" evidence="1">
    <location>
        <position position="321"/>
    </location>
</feature>
<feature type="splice variant" id="VSP_012005" description="In isoform 2." evidence="4">
    <location>
        <begin position="319"/>
        <end position="374"/>
    </location>
</feature>
<sequence length="500" mass="56452">MAFLLITRRLACSSQKNLHLFIPGSRYISQAAAKVDIEFDYDGPLMKTEVPGPRSKELMKQLNTIQNAEAVHFFCNYEESRGNYLVDVDGNRMLDLYSQISSVPIGYNHPALAKLVQQPQNASTFINRPALGILPPENFVDKLQESLMSVAPRGMSQLITMACGSCSNENAFKTIFMWYRSKERGQRGFSKEELETCMVNQSPGCPDYSILSFMGAFHGRTMGCLATTHSKAIHKIDIPSFDWPIAPFPRLKYPLEEFTTDNQQEEARCLEEVEDLIVKYRKKKRTVAGIIVEPIQSEGGDNHASDDFFRKLRDIARKHGCAFLVDEVQTGGGCTGKFWAHEHWGLDDPADVMTFSKKMMTGGFFHKEEFRPSAPYRIFNTWLGDPSKNLLLAEVINIIKREDLLNNVARVGKTLLTGLLDLQAQYPQFISRVRGRGTFCSFDTPDEAIRNKLILIARNKGVVLGGCGDKSIRFRPTLVFRDHHAHLFLSIFSGILADFK</sequence>
<protein>
    <recommendedName>
        <fullName>4-aminobutyrate aminotransferase, mitochondrial</fullName>
        <ecNumber evidence="2">2.6.1.19</ecNumber>
    </recommendedName>
    <alternativeName>
        <fullName>(S)-3-amino-2-methylpropionate transaminase</fullName>
        <ecNumber evidence="2">2.6.1.22</ecNumber>
    </alternativeName>
    <alternativeName>
        <fullName>GABA aminotransferase</fullName>
        <shortName>GABA-AT</shortName>
    </alternativeName>
    <alternativeName>
        <fullName>Gamma-amino-N-butyrate transaminase</fullName>
        <shortName>GABA transaminase</shortName>
        <shortName>GABA-T</shortName>
    </alternativeName>
    <alternativeName>
        <fullName>L-AIBAT</fullName>
    </alternativeName>
</protein>
<proteinExistence type="evidence at protein level"/>
<organism>
    <name type="scientific">Mus musculus</name>
    <name type="common">Mouse</name>
    <dbReference type="NCBI Taxonomy" id="10090"/>
    <lineage>
        <taxon>Eukaryota</taxon>
        <taxon>Metazoa</taxon>
        <taxon>Chordata</taxon>
        <taxon>Craniata</taxon>
        <taxon>Vertebrata</taxon>
        <taxon>Euteleostomi</taxon>
        <taxon>Mammalia</taxon>
        <taxon>Eutheria</taxon>
        <taxon>Euarchontoglires</taxon>
        <taxon>Glires</taxon>
        <taxon>Rodentia</taxon>
        <taxon>Myomorpha</taxon>
        <taxon>Muroidea</taxon>
        <taxon>Muridae</taxon>
        <taxon>Murinae</taxon>
        <taxon>Mus</taxon>
        <taxon>Mus</taxon>
    </lineage>
</organism>